<sequence>MGKIIGIDLGTTNSCVAIMEGNSVKVIENSEGARTTPSIIAYMEDGEILVGAPAKRQSVTNPKNTLYAVKRLIGRRFEEKEVQKDIALMPYKIMKADNGDAWIEVRDQKLAPPQISAETLRKMKKTAEDYLGEPVTEAVITVPAYFNDSQRQATKDAGRIAGLEVKRIINEPTAAALAFGLDKAEKGDRKIAVYDLGGGTFDVSIIEIADVDGEMQFEVLSTNGDTFLGGEDFDQRIIDYIIAEFKKEQGVDLSKDVLALQRLKESAEKAKIELSSSQQTEINLPYITADASGPKHLDLKITRAKLEALVEELIERTIEPCRVAIKDAGVKVGEIDDVILVGGMTRMPKVQEKVKEFFGKDPRRDVNPDEAVAVGAAIQGQVLSGDRKDVLLLDVTPLSLGIETLGGVMTKMINKNTTIPTKHAQVYSTADDNQGAVTIKVFQGEREMAAGNKLLGEFNLEGIPPAPRGTPQIEVSFDIDANGILHVGAKDKATGKENRITIKANSGLSEAEIEKMVKDAEANAEEDHKLRELADARNQGDALVHSTKKALTEYGDKLEAAEKEKIEAALKDLEETLKSGSADKAAIEAKIEVVATASQKMGEKMYADMQAAQGAEAAAAGAAGAGATAGGASQQQDDVVDAEFKEVKKD</sequence>
<evidence type="ECO:0000255" key="1">
    <source>
        <dbReference type="HAMAP-Rule" id="MF_00332"/>
    </source>
</evidence>
<gene>
    <name evidence="1" type="primary">dnaK</name>
    <name type="ordered locus">Bphyt_0737</name>
</gene>
<proteinExistence type="inferred from homology"/>
<name>DNAK_PARPJ</name>
<feature type="chain" id="PRO_1000119682" description="Chaperone protein DnaK">
    <location>
        <begin position="1"/>
        <end position="650"/>
    </location>
</feature>
<feature type="modified residue" description="Phosphothreonine; by autocatalysis" evidence="1">
    <location>
        <position position="200"/>
    </location>
</feature>
<organism>
    <name type="scientific">Paraburkholderia phytofirmans (strain DSM 17436 / LMG 22146 / PsJN)</name>
    <name type="common">Burkholderia phytofirmans</name>
    <dbReference type="NCBI Taxonomy" id="398527"/>
    <lineage>
        <taxon>Bacteria</taxon>
        <taxon>Pseudomonadati</taxon>
        <taxon>Pseudomonadota</taxon>
        <taxon>Betaproteobacteria</taxon>
        <taxon>Burkholderiales</taxon>
        <taxon>Burkholderiaceae</taxon>
        <taxon>Paraburkholderia</taxon>
    </lineage>
</organism>
<comment type="function">
    <text evidence="1">Acts as a chaperone.</text>
</comment>
<comment type="induction">
    <text evidence="1">By stress conditions e.g. heat shock.</text>
</comment>
<comment type="similarity">
    <text evidence="1">Belongs to the heat shock protein 70 family.</text>
</comment>
<protein>
    <recommendedName>
        <fullName evidence="1">Chaperone protein DnaK</fullName>
    </recommendedName>
    <alternativeName>
        <fullName evidence="1">HSP70</fullName>
    </alternativeName>
    <alternativeName>
        <fullName evidence="1">Heat shock 70 kDa protein</fullName>
    </alternativeName>
    <alternativeName>
        <fullName evidence="1">Heat shock protein 70</fullName>
    </alternativeName>
</protein>
<keyword id="KW-0067">ATP-binding</keyword>
<keyword id="KW-0143">Chaperone</keyword>
<keyword id="KW-0547">Nucleotide-binding</keyword>
<keyword id="KW-0597">Phosphoprotein</keyword>
<keyword id="KW-0346">Stress response</keyword>
<reference key="1">
    <citation type="journal article" date="2011" name="J. Bacteriol.">
        <title>Complete genome sequence of the plant growth-promoting endophyte Burkholderia phytofirmans strain PsJN.</title>
        <authorList>
            <person name="Weilharter A."/>
            <person name="Mitter B."/>
            <person name="Shin M.V."/>
            <person name="Chain P.S."/>
            <person name="Nowak J."/>
            <person name="Sessitsch A."/>
        </authorList>
    </citation>
    <scope>NUCLEOTIDE SEQUENCE [LARGE SCALE GENOMIC DNA]</scope>
    <source>
        <strain>DSM 17436 / LMG 22146 / PsJN</strain>
    </source>
</reference>
<accession>B2SXC6</accession>
<dbReference type="EMBL" id="CP001052">
    <property type="protein sequence ID" value="ACD15161.1"/>
    <property type="molecule type" value="Genomic_DNA"/>
</dbReference>
<dbReference type="RefSeq" id="WP_012431797.1">
    <property type="nucleotide sequence ID" value="NC_010681.1"/>
</dbReference>
<dbReference type="SMR" id="B2SXC6"/>
<dbReference type="STRING" id="398527.Bphyt_0737"/>
<dbReference type="KEGG" id="bpy:Bphyt_0737"/>
<dbReference type="eggNOG" id="COG0443">
    <property type="taxonomic scope" value="Bacteria"/>
</dbReference>
<dbReference type="HOGENOM" id="CLU_005965_2_1_4"/>
<dbReference type="OrthoDB" id="9766019at2"/>
<dbReference type="Proteomes" id="UP000001739">
    <property type="component" value="Chromosome 1"/>
</dbReference>
<dbReference type="GO" id="GO:0005524">
    <property type="term" value="F:ATP binding"/>
    <property type="evidence" value="ECO:0007669"/>
    <property type="project" value="UniProtKB-UniRule"/>
</dbReference>
<dbReference type="GO" id="GO:0140662">
    <property type="term" value="F:ATP-dependent protein folding chaperone"/>
    <property type="evidence" value="ECO:0007669"/>
    <property type="project" value="InterPro"/>
</dbReference>
<dbReference type="GO" id="GO:0051082">
    <property type="term" value="F:unfolded protein binding"/>
    <property type="evidence" value="ECO:0007669"/>
    <property type="project" value="InterPro"/>
</dbReference>
<dbReference type="CDD" id="cd10234">
    <property type="entry name" value="ASKHA_NBD_HSP70_DnaK-like"/>
    <property type="match status" value="1"/>
</dbReference>
<dbReference type="FunFam" id="2.60.34.10:FF:000014">
    <property type="entry name" value="Chaperone protein DnaK HSP70"/>
    <property type="match status" value="1"/>
</dbReference>
<dbReference type="FunFam" id="1.20.1270.10:FF:000001">
    <property type="entry name" value="Molecular chaperone DnaK"/>
    <property type="match status" value="1"/>
</dbReference>
<dbReference type="FunFam" id="3.30.420.40:FF:000004">
    <property type="entry name" value="Molecular chaperone DnaK"/>
    <property type="match status" value="1"/>
</dbReference>
<dbReference type="FunFam" id="3.90.640.10:FF:000003">
    <property type="entry name" value="Molecular chaperone DnaK"/>
    <property type="match status" value="1"/>
</dbReference>
<dbReference type="Gene3D" id="1.20.1270.10">
    <property type="match status" value="1"/>
</dbReference>
<dbReference type="Gene3D" id="3.30.420.40">
    <property type="match status" value="2"/>
</dbReference>
<dbReference type="Gene3D" id="3.90.640.10">
    <property type="entry name" value="Actin, Chain A, domain 4"/>
    <property type="match status" value="1"/>
</dbReference>
<dbReference type="Gene3D" id="2.60.34.10">
    <property type="entry name" value="Substrate Binding Domain Of DNAk, Chain A, domain 1"/>
    <property type="match status" value="1"/>
</dbReference>
<dbReference type="HAMAP" id="MF_00332">
    <property type="entry name" value="DnaK"/>
    <property type="match status" value="1"/>
</dbReference>
<dbReference type="InterPro" id="IPR043129">
    <property type="entry name" value="ATPase_NBD"/>
</dbReference>
<dbReference type="InterPro" id="IPR012725">
    <property type="entry name" value="Chaperone_DnaK"/>
</dbReference>
<dbReference type="InterPro" id="IPR018181">
    <property type="entry name" value="Heat_shock_70_CS"/>
</dbReference>
<dbReference type="InterPro" id="IPR029048">
    <property type="entry name" value="HSP70_C_sf"/>
</dbReference>
<dbReference type="InterPro" id="IPR029047">
    <property type="entry name" value="HSP70_peptide-bd_sf"/>
</dbReference>
<dbReference type="InterPro" id="IPR013126">
    <property type="entry name" value="Hsp_70_fam"/>
</dbReference>
<dbReference type="NCBIfam" id="NF001413">
    <property type="entry name" value="PRK00290.1"/>
    <property type="match status" value="1"/>
</dbReference>
<dbReference type="NCBIfam" id="NF003520">
    <property type="entry name" value="PRK05183.1"/>
    <property type="match status" value="1"/>
</dbReference>
<dbReference type="NCBIfam" id="TIGR02350">
    <property type="entry name" value="prok_dnaK"/>
    <property type="match status" value="1"/>
</dbReference>
<dbReference type="PANTHER" id="PTHR19375">
    <property type="entry name" value="HEAT SHOCK PROTEIN 70KDA"/>
    <property type="match status" value="1"/>
</dbReference>
<dbReference type="Pfam" id="PF00012">
    <property type="entry name" value="HSP70"/>
    <property type="match status" value="1"/>
</dbReference>
<dbReference type="PRINTS" id="PR00301">
    <property type="entry name" value="HEATSHOCK70"/>
</dbReference>
<dbReference type="SUPFAM" id="SSF53067">
    <property type="entry name" value="Actin-like ATPase domain"/>
    <property type="match status" value="2"/>
</dbReference>
<dbReference type="SUPFAM" id="SSF100934">
    <property type="entry name" value="Heat shock protein 70kD (HSP70), C-terminal subdomain"/>
    <property type="match status" value="1"/>
</dbReference>
<dbReference type="SUPFAM" id="SSF100920">
    <property type="entry name" value="Heat shock protein 70kD (HSP70), peptide-binding domain"/>
    <property type="match status" value="1"/>
</dbReference>
<dbReference type="PROSITE" id="PS00297">
    <property type="entry name" value="HSP70_1"/>
    <property type="match status" value="1"/>
</dbReference>
<dbReference type="PROSITE" id="PS00329">
    <property type="entry name" value="HSP70_2"/>
    <property type="match status" value="1"/>
</dbReference>
<dbReference type="PROSITE" id="PS01036">
    <property type="entry name" value="HSP70_3"/>
    <property type="match status" value="1"/>
</dbReference>